<dbReference type="EC" id="2.1.3.15" evidence="1"/>
<dbReference type="EMBL" id="CP000305">
    <property type="protein sequence ID" value="ABG18508.1"/>
    <property type="molecule type" value="Genomic_DNA"/>
</dbReference>
<dbReference type="EMBL" id="ACNQ01000013">
    <property type="protein sequence ID" value="EEO76242.1"/>
    <property type="molecule type" value="Genomic_DNA"/>
</dbReference>
<dbReference type="RefSeq" id="WP_002228520.1">
    <property type="nucleotide sequence ID" value="NC_008149.1"/>
</dbReference>
<dbReference type="SMR" id="Q1CHM2"/>
<dbReference type="KEGG" id="ypn:YPN_2179"/>
<dbReference type="HOGENOM" id="CLU_015486_1_0_6"/>
<dbReference type="UniPathway" id="UPA00655">
    <property type="reaction ID" value="UER00711"/>
</dbReference>
<dbReference type="Proteomes" id="UP000008936">
    <property type="component" value="Chromosome"/>
</dbReference>
<dbReference type="GO" id="GO:0009329">
    <property type="term" value="C:acetate CoA-transferase complex"/>
    <property type="evidence" value="ECO:0007669"/>
    <property type="project" value="TreeGrafter"/>
</dbReference>
<dbReference type="GO" id="GO:0003989">
    <property type="term" value="F:acetyl-CoA carboxylase activity"/>
    <property type="evidence" value="ECO:0007669"/>
    <property type="project" value="InterPro"/>
</dbReference>
<dbReference type="GO" id="GO:0005524">
    <property type="term" value="F:ATP binding"/>
    <property type="evidence" value="ECO:0007669"/>
    <property type="project" value="UniProtKB-KW"/>
</dbReference>
<dbReference type="GO" id="GO:0016743">
    <property type="term" value="F:carboxyl- or carbamoyltransferase activity"/>
    <property type="evidence" value="ECO:0007669"/>
    <property type="project" value="UniProtKB-UniRule"/>
</dbReference>
<dbReference type="GO" id="GO:0008270">
    <property type="term" value="F:zinc ion binding"/>
    <property type="evidence" value="ECO:0007669"/>
    <property type="project" value="UniProtKB-UniRule"/>
</dbReference>
<dbReference type="GO" id="GO:0006633">
    <property type="term" value="P:fatty acid biosynthetic process"/>
    <property type="evidence" value="ECO:0007669"/>
    <property type="project" value="UniProtKB-KW"/>
</dbReference>
<dbReference type="GO" id="GO:2001295">
    <property type="term" value="P:malonyl-CoA biosynthetic process"/>
    <property type="evidence" value="ECO:0007669"/>
    <property type="project" value="UniProtKB-UniRule"/>
</dbReference>
<dbReference type="FunFam" id="3.90.226.10:FF:000013">
    <property type="entry name" value="Acetyl-coenzyme A carboxylase carboxyl transferase subunit beta"/>
    <property type="match status" value="1"/>
</dbReference>
<dbReference type="Gene3D" id="3.90.226.10">
    <property type="entry name" value="2-enoyl-CoA Hydratase, Chain A, domain 1"/>
    <property type="match status" value="1"/>
</dbReference>
<dbReference type="HAMAP" id="MF_01395">
    <property type="entry name" value="AcetylCoA_CT_beta"/>
    <property type="match status" value="1"/>
</dbReference>
<dbReference type="InterPro" id="IPR034733">
    <property type="entry name" value="AcCoA_carboxyl_beta"/>
</dbReference>
<dbReference type="InterPro" id="IPR000438">
    <property type="entry name" value="Acetyl_CoA_COase_Trfase_b_su"/>
</dbReference>
<dbReference type="InterPro" id="IPR029045">
    <property type="entry name" value="ClpP/crotonase-like_dom_sf"/>
</dbReference>
<dbReference type="InterPro" id="IPR011762">
    <property type="entry name" value="COA_CT_N"/>
</dbReference>
<dbReference type="InterPro" id="IPR041010">
    <property type="entry name" value="Znf-ACC"/>
</dbReference>
<dbReference type="NCBIfam" id="TIGR00515">
    <property type="entry name" value="accD"/>
    <property type="match status" value="1"/>
</dbReference>
<dbReference type="PANTHER" id="PTHR42995">
    <property type="entry name" value="ACETYL-COENZYME A CARBOXYLASE CARBOXYL TRANSFERASE SUBUNIT BETA, CHLOROPLASTIC"/>
    <property type="match status" value="1"/>
</dbReference>
<dbReference type="PANTHER" id="PTHR42995:SF5">
    <property type="entry name" value="ACETYL-COENZYME A CARBOXYLASE CARBOXYL TRANSFERASE SUBUNIT BETA, CHLOROPLASTIC"/>
    <property type="match status" value="1"/>
</dbReference>
<dbReference type="Pfam" id="PF01039">
    <property type="entry name" value="Carboxyl_trans"/>
    <property type="match status" value="1"/>
</dbReference>
<dbReference type="Pfam" id="PF17848">
    <property type="entry name" value="Zn_ribbon_ACC"/>
    <property type="match status" value="1"/>
</dbReference>
<dbReference type="PRINTS" id="PR01070">
    <property type="entry name" value="ACCCTRFRASEB"/>
</dbReference>
<dbReference type="SUPFAM" id="SSF52096">
    <property type="entry name" value="ClpP/crotonase"/>
    <property type="match status" value="1"/>
</dbReference>
<dbReference type="PROSITE" id="PS50980">
    <property type="entry name" value="COA_CT_NTER"/>
    <property type="match status" value="1"/>
</dbReference>
<reference key="1">
    <citation type="journal article" date="2006" name="J. Bacteriol.">
        <title>Complete genome sequence of Yersinia pestis strains Antiqua and Nepal516: evidence of gene reduction in an emerging pathogen.</title>
        <authorList>
            <person name="Chain P.S.G."/>
            <person name="Hu P."/>
            <person name="Malfatti S.A."/>
            <person name="Radnedge L."/>
            <person name="Larimer F."/>
            <person name="Vergez L.M."/>
            <person name="Worsham P."/>
            <person name="Chu M.C."/>
            <person name="Andersen G.L."/>
        </authorList>
    </citation>
    <scope>NUCLEOTIDE SEQUENCE [LARGE SCALE GENOMIC DNA]</scope>
    <source>
        <strain>Nepal516</strain>
    </source>
</reference>
<reference key="2">
    <citation type="submission" date="2009-04" db="EMBL/GenBank/DDBJ databases">
        <title>Yersinia pestis Nepal516A whole genome shotgun sequencing project.</title>
        <authorList>
            <person name="Plunkett G. III"/>
            <person name="Anderson B.D."/>
            <person name="Baumler D.J."/>
            <person name="Burland V."/>
            <person name="Cabot E.L."/>
            <person name="Glasner J.D."/>
            <person name="Mau B."/>
            <person name="Neeno-Eckwall E."/>
            <person name="Perna N.T."/>
            <person name="Munk A.C."/>
            <person name="Tapia R."/>
            <person name="Green L.D."/>
            <person name="Rogers Y.C."/>
            <person name="Detter J.C."/>
            <person name="Bruce D.C."/>
            <person name="Brettin T.S."/>
        </authorList>
    </citation>
    <scope>NUCLEOTIDE SEQUENCE [LARGE SCALE GENOMIC DNA]</scope>
    <source>
        <strain>Nepal516</strain>
    </source>
</reference>
<accession>Q1CHM2</accession>
<accession>C4GU55</accession>
<feature type="chain" id="PRO_0000359108" description="Acetyl-coenzyme A carboxylase carboxyl transferase subunit beta">
    <location>
        <begin position="1"/>
        <end position="304"/>
    </location>
</feature>
<feature type="domain" description="CoA carboxyltransferase N-terminal" evidence="2">
    <location>
        <begin position="25"/>
        <end position="294"/>
    </location>
</feature>
<feature type="zinc finger region" description="C4-type" evidence="1">
    <location>
        <begin position="29"/>
        <end position="51"/>
    </location>
</feature>
<feature type="binding site" evidence="1">
    <location>
        <position position="29"/>
    </location>
    <ligand>
        <name>Zn(2+)</name>
        <dbReference type="ChEBI" id="CHEBI:29105"/>
    </ligand>
</feature>
<feature type="binding site" evidence="1">
    <location>
        <position position="32"/>
    </location>
    <ligand>
        <name>Zn(2+)</name>
        <dbReference type="ChEBI" id="CHEBI:29105"/>
    </ligand>
</feature>
<feature type="binding site" evidence="1">
    <location>
        <position position="48"/>
    </location>
    <ligand>
        <name>Zn(2+)</name>
        <dbReference type="ChEBI" id="CHEBI:29105"/>
    </ligand>
</feature>
<feature type="binding site" evidence="1">
    <location>
        <position position="51"/>
    </location>
    <ligand>
        <name>Zn(2+)</name>
        <dbReference type="ChEBI" id="CHEBI:29105"/>
    </ligand>
</feature>
<evidence type="ECO:0000255" key="1">
    <source>
        <dbReference type="HAMAP-Rule" id="MF_01395"/>
    </source>
</evidence>
<evidence type="ECO:0000255" key="2">
    <source>
        <dbReference type="PROSITE-ProRule" id="PRU01136"/>
    </source>
</evidence>
<protein>
    <recommendedName>
        <fullName evidence="1">Acetyl-coenzyme A carboxylase carboxyl transferase subunit beta</fullName>
        <shortName evidence="1">ACCase subunit beta</shortName>
        <shortName evidence="1">Acetyl-CoA carboxylase carboxyltransferase subunit beta</shortName>
        <ecNumber evidence="1">2.1.3.15</ecNumber>
    </recommendedName>
</protein>
<keyword id="KW-0067">ATP-binding</keyword>
<keyword id="KW-0963">Cytoplasm</keyword>
<keyword id="KW-0275">Fatty acid biosynthesis</keyword>
<keyword id="KW-0276">Fatty acid metabolism</keyword>
<keyword id="KW-0444">Lipid biosynthesis</keyword>
<keyword id="KW-0443">Lipid metabolism</keyword>
<keyword id="KW-0479">Metal-binding</keyword>
<keyword id="KW-0547">Nucleotide-binding</keyword>
<keyword id="KW-0808">Transferase</keyword>
<keyword id="KW-0862">Zinc</keyword>
<keyword id="KW-0863">Zinc-finger</keyword>
<comment type="function">
    <text evidence="1">Component of the acetyl coenzyme A carboxylase (ACC) complex. Biotin carboxylase (BC) catalyzes the carboxylation of biotin on its carrier protein (BCCP) and then the CO(2) group is transferred by the transcarboxylase to acetyl-CoA to form malonyl-CoA.</text>
</comment>
<comment type="catalytic activity">
    <reaction evidence="1">
        <text>N(6)-carboxybiotinyl-L-lysyl-[protein] + acetyl-CoA = N(6)-biotinyl-L-lysyl-[protein] + malonyl-CoA</text>
        <dbReference type="Rhea" id="RHEA:54728"/>
        <dbReference type="Rhea" id="RHEA-COMP:10505"/>
        <dbReference type="Rhea" id="RHEA-COMP:10506"/>
        <dbReference type="ChEBI" id="CHEBI:57288"/>
        <dbReference type="ChEBI" id="CHEBI:57384"/>
        <dbReference type="ChEBI" id="CHEBI:83144"/>
        <dbReference type="ChEBI" id="CHEBI:83145"/>
        <dbReference type="EC" id="2.1.3.15"/>
    </reaction>
</comment>
<comment type="cofactor">
    <cofactor evidence="1">
        <name>Zn(2+)</name>
        <dbReference type="ChEBI" id="CHEBI:29105"/>
    </cofactor>
    <text evidence="1">Binds 1 zinc ion per subunit.</text>
</comment>
<comment type="pathway">
    <text evidence="1">Lipid metabolism; malonyl-CoA biosynthesis; malonyl-CoA from acetyl-CoA: step 1/1.</text>
</comment>
<comment type="subunit">
    <text evidence="1">Acetyl-CoA carboxylase is a heterohexamer composed of biotin carboxyl carrier protein (AccB), biotin carboxylase (AccC) and two subunits each of ACCase subunit alpha (AccA) and ACCase subunit beta (AccD).</text>
</comment>
<comment type="subcellular location">
    <subcellularLocation>
        <location evidence="1">Cytoplasm</location>
    </subcellularLocation>
</comment>
<comment type="similarity">
    <text evidence="1">Belongs to the AccD/PCCB family.</text>
</comment>
<sequence>MSWIERILNKSNITQTRKASIPEGVWTKCDSCGQVLYRAELERNLEVCPKCDHHMRMSARARLHMLLDAGSEVELGSELEPKDILKFRDSKKYKDRISAAQKDTGEKDALVAMKGTLQGMPIVAASFEFAFMGGSMASVVGARFVRAVEQALEDNCPLVCFSSSGGARMQEALMSLMQMAKTSAALAKMQERGLPYISVLTDPTMGGVSASLAMLGDINIAEPKALIGFAGPRVIEQTVREKLPPGFQRSEFLIEKGAIDIIVRRPVMRQTLASILSKLTHQPQPSVVESKADTVAQPENQADV</sequence>
<gene>
    <name evidence="1" type="primary">accD</name>
    <name type="ordered locus">YPN_2179</name>
    <name type="ORF">YP516_2439</name>
</gene>
<proteinExistence type="inferred from homology"/>
<organism>
    <name type="scientific">Yersinia pestis bv. Antiqua (strain Nepal516)</name>
    <dbReference type="NCBI Taxonomy" id="377628"/>
    <lineage>
        <taxon>Bacteria</taxon>
        <taxon>Pseudomonadati</taxon>
        <taxon>Pseudomonadota</taxon>
        <taxon>Gammaproteobacteria</taxon>
        <taxon>Enterobacterales</taxon>
        <taxon>Yersiniaceae</taxon>
        <taxon>Yersinia</taxon>
    </lineage>
</organism>
<name>ACCD_YERPN</name>